<gene>
    <name type="primary">CAMK2D</name>
</gene>
<comment type="function">
    <text evidence="2 3">Calcium/calmodulin-dependent protein kinase involved in the regulation of Ca(2+) homeostatis and excitation-contraction coupling (ECC) in heart by targeting ion channels, transporters and accessory proteins involved in Ca(2+) influx into the myocyte, Ca(2+) release from the sarcoplasmic reticulum (SR), SR Ca(2+) uptake and Na(+) and K(+) channel transport. Targets also transcription factors and signaling molecules to regulate heart function. In its activated form, is involved in the pathogenesis of dilated cardiomyopathy and heart failure. Contributes to cardiac decompensation and heart failure by regulating SR Ca(2+) release via direct phosphorylation of RYR2 Ca(2+) channel on 'Ser-2808'. In the nucleus, phosphorylates the MEF2 repressor HDAC4, promoting its nuclear export and binding to 14-3-3 protein, and expression of MEF2 and genes involved in the hypertrophic program. Is essential for left ventricular remodeling responses to myocardial infarction. In pathological myocardial remodeling acts downstream of the beta adrenergic receptor signaling cascade to regulate key proteins involved in ECC. Regulates Ca(2+) influx to myocytes by binding and phosphorylating the L-type Ca(2+) channel subunit beta-2 CACNB2. In addition to Ca(2+) channels, can target and regulate the cardiac sarcolemmal Na(+) channel Nav1.5/SCN5A and the K+ channel Kv4.3/KCND3, which contribute to arrhythmogenesis in heart failure. Phosphorylates phospholamban (PLN/PLB), an endogenous inhibitor of SERCA2A/ATP2A2, contributing to the enhancement of SR Ca(2+) uptake that may be important in frequency-dependent acceleration of relaxation (FDAR) and maintenance of contractile function during acidosis. May participate in the modulation of skeletal muscle function in response to exercise, by regulating SR Ca(2+) transport through phosphorylation of PLN/PLB and triadin, a ryanodine receptor-coupling factor. In response to interferon-gamma (IFN-gamma) stimulation, catalyzes phosphorylation of STAT1, stimulating the JAK-STAT signaling pathway (By similarity).</text>
</comment>
<comment type="catalytic activity">
    <reaction>
        <text>L-seryl-[protein] + ATP = O-phospho-L-seryl-[protein] + ADP + H(+)</text>
        <dbReference type="Rhea" id="RHEA:17989"/>
        <dbReference type="Rhea" id="RHEA-COMP:9863"/>
        <dbReference type="Rhea" id="RHEA-COMP:11604"/>
        <dbReference type="ChEBI" id="CHEBI:15378"/>
        <dbReference type="ChEBI" id="CHEBI:29999"/>
        <dbReference type="ChEBI" id="CHEBI:30616"/>
        <dbReference type="ChEBI" id="CHEBI:83421"/>
        <dbReference type="ChEBI" id="CHEBI:456216"/>
        <dbReference type="EC" id="2.7.11.17"/>
    </reaction>
</comment>
<comment type="catalytic activity">
    <reaction>
        <text>L-threonyl-[protein] + ATP = O-phospho-L-threonyl-[protein] + ADP + H(+)</text>
        <dbReference type="Rhea" id="RHEA:46608"/>
        <dbReference type="Rhea" id="RHEA-COMP:11060"/>
        <dbReference type="Rhea" id="RHEA-COMP:11605"/>
        <dbReference type="ChEBI" id="CHEBI:15378"/>
        <dbReference type="ChEBI" id="CHEBI:30013"/>
        <dbReference type="ChEBI" id="CHEBI:30616"/>
        <dbReference type="ChEBI" id="CHEBI:61977"/>
        <dbReference type="ChEBI" id="CHEBI:456216"/>
        <dbReference type="EC" id="2.7.11.17"/>
    </reaction>
</comment>
<comment type="activity regulation">
    <text>Activated by Ca(2+)/calmodulin. Binding of calmodulin results in conformational change that relieves intrasteric autoinhibition and allows autophosphorylation of Thr-287 which turns the kinase in a constitutively active form and confers to the kinase a Ca(2+)-independent activity.</text>
</comment>
<comment type="subunit">
    <text evidence="1">CAMK2 is composed of 4 different chains: alpha (CAMK2A), beta (CAMK2B), gamma (CAMK2G), and delta (CAMK2D). The different isoforms assemble into homo- or heteromultimeric holoenzymes composed of 12 subunits with two hexameric rings stacked one on top of the other. Interacts with RRAD and CACNB2 (By similarity).</text>
</comment>
<comment type="subcellular location">
    <subcellularLocation>
        <location evidence="7">Cell membrane</location>
        <location evidence="7">Sarcolemma</location>
        <topology evidence="7">Peripheral membrane protein</topology>
        <orientation evidence="7">Cytoplasmic side</orientation>
    </subcellularLocation>
    <subcellularLocation>
        <location evidence="7">Sarcoplasmic reticulum membrane</location>
        <topology evidence="7">Peripheral membrane protein</topology>
        <orientation evidence="7">Cytoplasmic side</orientation>
    </subcellularLocation>
</comment>
<comment type="domain">
    <text>The CAMK2 protein kinases contain a unique C-terminal subunit association domain responsible for oligomerization.</text>
</comment>
<comment type="PTM">
    <text evidence="1">Autophosphorylation of Thr-287 following activation by Ca(2+)/calmodulin. Phosphorylation of Thr-287 locks the kinase into an activated state (By similarity).</text>
</comment>
<comment type="similarity">
    <text evidence="7">Belongs to the protein kinase superfamily. CAMK Ser/Thr protein kinase family. CaMK subfamily.</text>
</comment>
<keyword id="KW-0007">Acetylation</keyword>
<keyword id="KW-0067">ATP-binding</keyword>
<keyword id="KW-0112">Calmodulin-binding</keyword>
<keyword id="KW-1003">Cell membrane</keyword>
<keyword id="KW-0418">Kinase</keyword>
<keyword id="KW-0472">Membrane</keyword>
<keyword id="KW-0547">Nucleotide-binding</keyword>
<keyword id="KW-0597">Phosphoprotein</keyword>
<keyword id="KW-1185">Reference proteome</keyword>
<keyword id="KW-0703">Sarcoplasmic reticulum</keyword>
<keyword id="KW-0723">Serine/threonine-protein kinase</keyword>
<keyword id="KW-0808">Transferase</keyword>
<name>KCC2D_BOVIN</name>
<evidence type="ECO:0000250" key="1"/>
<evidence type="ECO:0000250" key="2">
    <source>
        <dbReference type="UniProtKB" id="Q13557"/>
    </source>
</evidence>
<evidence type="ECO:0000250" key="3">
    <source>
        <dbReference type="UniProtKB" id="Q6PHZ2"/>
    </source>
</evidence>
<evidence type="ECO:0000255" key="4">
    <source>
        <dbReference type="PROSITE-ProRule" id="PRU00159"/>
    </source>
</evidence>
<evidence type="ECO:0000255" key="5">
    <source>
        <dbReference type="PROSITE-ProRule" id="PRU10027"/>
    </source>
</evidence>
<evidence type="ECO:0000256" key="6">
    <source>
        <dbReference type="SAM" id="MobiDB-lite"/>
    </source>
</evidence>
<evidence type="ECO:0000305" key="7"/>
<sequence length="488" mass="55293">MASTTTCTRFTDEYQLFEELGKGAFSVVRRCMKIPTGQEYAAKIINTKKLSARDHQKLEREARICRLLKHPNIVRLHDSISEEGFHYLVFDLVTGGELFEDIVAREYYSEADASHCIQQILESVNHCHLNGIVHRDLKPENLLLASKSKGAAVKLADFGLAIEVQGDQQAWFGFAGTPGYLSPEVLRKDPYGKPVDMWACGVILYILLVGYPPFWDEDQHRLYQQIKAGAYDFPSPEWDTVTPEAKDLINKMLTINPAKRITASEALKHPWICQRSTVASMMHRQETVDCLKKFNARRKLKGAILTTMLATRNFSAKSLLKKPDGVKKRKSSSSVQMMESTESSNTTIEDEDVKARKQEIIKVTEQLIEAINNGDFEAYTKICDPGLTAFEPEALGNLVEGMDFHRFYFENALSKSNKPIHTIILNPHVHLVGDDAACIAYIRLTQYMDGSGMPKTMQSEETRVWHRRDGKWQNVHFHRSGSPTVPIN</sequence>
<organism>
    <name type="scientific">Bos taurus</name>
    <name type="common">Bovine</name>
    <dbReference type="NCBI Taxonomy" id="9913"/>
    <lineage>
        <taxon>Eukaryota</taxon>
        <taxon>Metazoa</taxon>
        <taxon>Chordata</taxon>
        <taxon>Craniata</taxon>
        <taxon>Vertebrata</taxon>
        <taxon>Euteleostomi</taxon>
        <taxon>Mammalia</taxon>
        <taxon>Eutheria</taxon>
        <taxon>Laurasiatheria</taxon>
        <taxon>Artiodactyla</taxon>
        <taxon>Ruminantia</taxon>
        <taxon>Pecora</taxon>
        <taxon>Bovidae</taxon>
        <taxon>Bovinae</taxon>
        <taxon>Bos</taxon>
    </lineage>
</organism>
<reference key="1">
    <citation type="submission" date="2005-09" db="EMBL/GenBank/DDBJ databases">
        <authorList>
            <consortium name="NIH - Mammalian Gene Collection (MGC) project"/>
        </authorList>
    </citation>
    <scope>NUCLEOTIDE SEQUENCE [LARGE SCALE MRNA]</scope>
    <source>
        <strain>Hereford</strain>
        <tissue>Heart ventricle</tissue>
    </source>
</reference>
<feature type="initiator methionine" description="Removed" evidence="2">
    <location>
        <position position="1"/>
    </location>
</feature>
<feature type="chain" id="PRO_0000277816" description="Calcium/calmodulin-dependent protein kinase type II subunit delta">
    <location>
        <begin position="2"/>
        <end position="488"/>
    </location>
</feature>
<feature type="domain" description="Protein kinase" evidence="4">
    <location>
        <begin position="14"/>
        <end position="272"/>
    </location>
</feature>
<feature type="region of interest" description="Autoinhibitory domain" evidence="1">
    <location>
        <begin position="283"/>
        <end position="292"/>
    </location>
</feature>
<feature type="region of interest" description="Calmodulin-binding" evidence="1">
    <location>
        <begin position="291"/>
        <end position="301"/>
    </location>
</feature>
<feature type="region of interest" description="Disordered" evidence="6">
    <location>
        <begin position="325"/>
        <end position="350"/>
    </location>
</feature>
<feature type="compositionally biased region" description="Polar residues" evidence="6">
    <location>
        <begin position="332"/>
        <end position="347"/>
    </location>
</feature>
<feature type="active site" description="Proton acceptor" evidence="4 5">
    <location>
        <position position="136"/>
    </location>
</feature>
<feature type="binding site" evidence="4">
    <location>
        <begin position="20"/>
        <end position="28"/>
    </location>
    <ligand>
        <name>ATP</name>
        <dbReference type="ChEBI" id="CHEBI:30616"/>
    </ligand>
</feature>
<feature type="binding site" evidence="4">
    <location>
        <position position="43"/>
    </location>
    <ligand>
        <name>ATP</name>
        <dbReference type="ChEBI" id="CHEBI:30616"/>
    </ligand>
</feature>
<feature type="modified residue" description="N-acetylalanine" evidence="2">
    <location>
        <position position="2"/>
    </location>
</feature>
<feature type="modified residue" description="Phosphothreonine; by autocatalysis" evidence="2">
    <location>
        <position position="287"/>
    </location>
</feature>
<feature type="modified residue" description="Phosphothreonine; by autocatalysis" evidence="1">
    <location>
        <position position="306"/>
    </location>
</feature>
<feature type="modified residue" description="Phosphothreonine; by autocatalysis" evidence="1">
    <location>
        <position position="307"/>
    </location>
</feature>
<feature type="modified residue" description="Phosphoserine" evidence="2">
    <location>
        <position position="315"/>
    </location>
</feature>
<feature type="modified residue" description="N6-acetyllysine" evidence="3">
    <location>
        <position position="317"/>
    </location>
</feature>
<feature type="modified residue" description="Phosphoserine" evidence="2">
    <location>
        <position position="318"/>
    </location>
</feature>
<feature type="modified residue" description="Phosphoserine" evidence="2">
    <location>
        <position position="340"/>
    </location>
</feature>
<feature type="modified residue" description="Phosphothreonine" evidence="2">
    <location>
        <position position="341"/>
    </location>
</feature>
<feature type="modified residue" description="Phosphoserine" evidence="3">
    <location>
        <position position="343"/>
    </location>
</feature>
<feature type="modified residue" description="Phosphothreonine" evidence="3">
    <location>
        <position position="346"/>
    </location>
</feature>
<feature type="modified residue" description="Phosphothreonine" evidence="2">
    <location>
        <position position="347"/>
    </location>
</feature>
<feature type="modified residue" description="Phosphoserine" evidence="2">
    <location>
        <position position="414"/>
    </location>
</feature>
<accession>Q2HJF7</accession>
<proteinExistence type="evidence at transcript level"/>
<protein>
    <recommendedName>
        <fullName>Calcium/calmodulin-dependent protein kinase type II subunit delta</fullName>
        <shortName>CaM kinase II subunit delta</shortName>
        <shortName>CaMK-II subunit delta</shortName>
        <ecNumber>2.7.11.17</ecNumber>
    </recommendedName>
</protein>
<dbReference type="EC" id="2.7.11.17"/>
<dbReference type="EMBL" id="BC105459">
    <property type="protein sequence ID" value="AAI05460.1"/>
    <property type="molecule type" value="mRNA"/>
</dbReference>
<dbReference type="RefSeq" id="NP_001039798.1">
    <property type="nucleotide sequence ID" value="NM_001046333.1"/>
</dbReference>
<dbReference type="SMR" id="Q2HJF7"/>
<dbReference type="FunCoup" id="Q2HJF7">
    <property type="interactions" value="1502"/>
</dbReference>
<dbReference type="STRING" id="9913.ENSBTAP00000069201"/>
<dbReference type="PaxDb" id="9913-ENSBTAP00000039621"/>
<dbReference type="PeptideAtlas" id="Q2HJF7"/>
<dbReference type="Ensembl" id="ENSBTAT00000039835.3">
    <property type="protein sequence ID" value="ENSBTAP00000039621.2"/>
    <property type="gene ID" value="ENSBTAG00000014463.7"/>
</dbReference>
<dbReference type="GeneID" id="532713"/>
<dbReference type="KEGG" id="bta:532713"/>
<dbReference type="CTD" id="817"/>
<dbReference type="VEuPathDB" id="HostDB:ENSBTAG00000014463"/>
<dbReference type="VGNC" id="VGNC:53692">
    <property type="gene designation" value="CAMK2D"/>
</dbReference>
<dbReference type="eggNOG" id="KOG0033">
    <property type="taxonomic scope" value="Eukaryota"/>
</dbReference>
<dbReference type="GeneTree" id="ENSGT00940000159769"/>
<dbReference type="InParanoid" id="Q2HJF7"/>
<dbReference type="OrthoDB" id="336747at2759"/>
<dbReference type="TreeFam" id="TF315229"/>
<dbReference type="Reactome" id="R-BTA-3371571">
    <property type="pathway name" value="HSF1-dependent transactivation"/>
</dbReference>
<dbReference type="Reactome" id="R-BTA-399719">
    <property type="pathway name" value="Trafficking of AMPA receptors"/>
</dbReference>
<dbReference type="Reactome" id="R-BTA-438066">
    <property type="pathway name" value="Unblocking of NMDA receptors, glutamate binding and activation"/>
</dbReference>
<dbReference type="Reactome" id="R-BTA-5576892">
    <property type="pathway name" value="Phase 0 - rapid depolarisation"/>
</dbReference>
<dbReference type="Reactome" id="R-BTA-5578775">
    <property type="pathway name" value="Ion homeostasis"/>
</dbReference>
<dbReference type="Reactome" id="R-BTA-5673000">
    <property type="pathway name" value="RAF activation"/>
</dbReference>
<dbReference type="Reactome" id="R-BTA-5673001">
    <property type="pathway name" value="RAF/MAP kinase cascade"/>
</dbReference>
<dbReference type="Reactome" id="R-BTA-877300">
    <property type="pathway name" value="Interferon gamma signaling"/>
</dbReference>
<dbReference type="Reactome" id="R-BTA-936837">
    <property type="pathway name" value="Ion transport by P-type ATPases"/>
</dbReference>
<dbReference type="Proteomes" id="UP000009136">
    <property type="component" value="Chromosome 6"/>
</dbReference>
<dbReference type="Bgee" id="ENSBTAG00000014463">
    <property type="expression patterns" value="Expressed in cardiac ventricle and 105 other cell types or tissues"/>
</dbReference>
<dbReference type="GO" id="GO:0005737">
    <property type="term" value="C:cytoplasm"/>
    <property type="evidence" value="ECO:0000318"/>
    <property type="project" value="GO_Central"/>
</dbReference>
<dbReference type="GO" id="GO:0043005">
    <property type="term" value="C:neuron projection"/>
    <property type="evidence" value="ECO:0000318"/>
    <property type="project" value="GO_Central"/>
</dbReference>
<dbReference type="GO" id="GO:0014069">
    <property type="term" value="C:postsynaptic density"/>
    <property type="evidence" value="ECO:0000318"/>
    <property type="project" value="GO_Central"/>
</dbReference>
<dbReference type="GO" id="GO:0042383">
    <property type="term" value="C:sarcolemma"/>
    <property type="evidence" value="ECO:0007669"/>
    <property type="project" value="UniProtKB-SubCell"/>
</dbReference>
<dbReference type="GO" id="GO:0033017">
    <property type="term" value="C:sarcoplasmic reticulum membrane"/>
    <property type="evidence" value="ECO:0007669"/>
    <property type="project" value="UniProtKB-SubCell"/>
</dbReference>
<dbReference type="GO" id="GO:0005524">
    <property type="term" value="F:ATP binding"/>
    <property type="evidence" value="ECO:0007669"/>
    <property type="project" value="UniProtKB-KW"/>
</dbReference>
<dbReference type="GO" id="GO:0004683">
    <property type="term" value="F:calcium/calmodulin-dependent protein kinase activity"/>
    <property type="evidence" value="ECO:0000318"/>
    <property type="project" value="GO_Central"/>
</dbReference>
<dbReference type="GO" id="GO:0005516">
    <property type="term" value="F:calmodulin binding"/>
    <property type="evidence" value="ECO:0000318"/>
    <property type="project" value="GO_Central"/>
</dbReference>
<dbReference type="GO" id="GO:0106310">
    <property type="term" value="F:protein serine kinase activity"/>
    <property type="evidence" value="ECO:0007669"/>
    <property type="project" value="RHEA"/>
</dbReference>
<dbReference type="GO" id="GO:0010613">
    <property type="term" value="P:positive regulation of cardiac muscle hypertrophy"/>
    <property type="evidence" value="ECO:0000250"/>
    <property type="project" value="UniProtKB"/>
</dbReference>
<dbReference type="GO" id="GO:0006468">
    <property type="term" value="P:protein phosphorylation"/>
    <property type="evidence" value="ECO:0000250"/>
    <property type="project" value="UniProtKB"/>
</dbReference>
<dbReference type="GO" id="GO:0060341">
    <property type="term" value="P:regulation of cellular localization"/>
    <property type="evidence" value="ECO:0000250"/>
    <property type="project" value="UniProtKB"/>
</dbReference>
<dbReference type="GO" id="GO:0048168">
    <property type="term" value="P:regulation of neuronal synaptic plasticity"/>
    <property type="evidence" value="ECO:0000318"/>
    <property type="project" value="GO_Central"/>
</dbReference>
<dbReference type="GO" id="GO:1903076">
    <property type="term" value="P:regulation of protein localization to plasma membrane"/>
    <property type="evidence" value="ECO:0000318"/>
    <property type="project" value="GO_Central"/>
</dbReference>
<dbReference type="CDD" id="cd14086">
    <property type="entry name" value="STKc_CaMKII"/>
    <property type="match status" value="1"/>
</dbReference>
<dbReference type="FunFam" id="1.10.510.10:FF:000001">
    <property type="entry name" value="Calcium/calmodulin-dependent protein kinase type II subunit delta"/>
    <property type="match status" value="1"/>
</dbReference>
<dbReference type="FunFam" id="3.30.200.20:FF:000002">
    <property type="entry name" value="Calcium/calmodulin-dependent protein kinase type II subunit delta isoform 2"/>
    <property type="match status" value="1"/>
</dbReference>
<dbReference type="FunFam" id="3.10.450.50:FF:000001">
    <property type="entry name" value="calcium/calmodulin-dependent protein kinase type II subunit gamma isoform X1"/>
    <property type="match status" value="1"/>
</dbReference>
<dbReference type="Gene3D" id="3.10.450.50">
    <property type="match status" value="1"/>
</dbReference>
<dbReference type="Gene3D" id="6.10.140.620">
    <property type="match status" value="1"/>
</dbReference>
<dbReference type="Gene3D" id="3.30.200.20">
    <property type="entry name" value="Phosphorylase Kinase, domain 1"/>
    <property type="match status" value="1"/>
</dbReference>
<dbReference type="Gene3D" id="1.10.510.10">
    <property type="entry name" value="Transferase(Phosphotransferase) domain 1"/>
    <property type="match status" value="1"/>
</dbReference>
<dbReference type="InterPro" id="IPR013543">
    <property type="entry name" value="Ca/CaM-dep_prot_kinase-assoc"/>
</dbReference>
<dbReference type="InterPro" id="IPR011009">
    <property type="entry name" value="Kinase-like_dom_sf"/>
</dbReference>
<dbReference type="InterPro" id="IPR032710">
    <property type="entry name" value="NTF2-like_dom_sf"/>
</dbReference>
<dbReference type="InterPro" id="IPR000719">
    <property type="entry name" value="Prot_kinase_dom"/>
</dbReference>
<dbReference type="InterPro" id="IPR017441">
    <property type="entry name" value="Protein_kinase_ATP_BS"/>
</dbReference>
<dbReference type="InterPro" id="IPR008271">
    <property type="entry name" value="Ser/Thr_kinase_AS"/>
</dbReference>
<dbReference type="PANTHER" id="PTHR24347">
    <property type="entry name" value="SERINE/THREONINE-PROTEIN KINASE"/>
    <property type="match status" value="1"/>
</dbReference>
<dbReference type="Pfam" id="PF08332">
    <property type="entry name" value="CaMKII_AD"/>
    <property type="match status" value="1"/>
</dbReference>
<dbReference type="Pfam" id="PF00069">
    <property type="entry name" value="Pkinase"/>
    <property type="match status" value="1"/>
</dbReference>
<dbReference type="SMART" id="SM00220">
    <property type="entry name" value="S_TKc"/>
    <property type="match status" value="1"/>
</dbReference>
<dbReference type="SUPFAM" id="SSF54427">
    <property type="entry name" value="NTF2-like"/>
    <property type="match status" value="1"/>
</dbReference>
<dbReference type="SUPFAM" id="SSF56112">
    <property type="entry name" value="Protein kinase-like (PK-like)"/>
    <property type="match status" value="1"/>
</dbReference>
<dbReference type="PROSITE" id="PS00107">
    <property type="entry name" value="PROTEIN_KINASE_ATP"/>
    <property type="match status" value="1"/>
</dbReference>
<dbReference type="PROSITE" id="PS50011">
    <property type="entry name" value="PROTEIN_KINASE_DOM"/>
    <property type="match status" value="1"/>
</dbReference>
<dbReference type="PROSITE" id="PS00108">
    <property type="entry name" value="PROTEIN_KINASE_ST"/>
    <property type="match status" value="1"/>
</dbReference>